<comment type="function">
    <text>Has menaquinol-oxidizing activity. HmeC and HmeD subunits may together mediate electron transfer from menaquinol to an unidentified electron acceptor on the cytoplasmic side of the membrane.</text>
</comment>
<comment type="cofactor">
    <cofactor evidence="3">
        <name>[4Fe-4S] cluster</name>
        <dbReference type="ChEBI" id="CHEBI:49883"/>
    </cofactor>
    <text evidence="3">Binds 2 [4Fe-4S] clusters per subunit.</text>
</comment>
<comment type="subunit">
    <text>Consists of five subunits: an integral membrane subunit, a cytochrome b-like subunit, a cytochrome c subunit and two iron-sulfur subunits.</text>
</comment>
<comment type="subcellular location">
    <subcellularLocation>
        <location>Cell membrane</location>
        <topology>Peripheral membrane protein</topology>
    </subcellularLocation>
</comment>
<organism>
    <name type="scientific">Archaeoglobus fulgidus (strain ATCC 49558 / DSM 4304 / JCM 9628 / NBRC 100126 / VC-16)</name>
    <dbReference type="NCBI Taxonomy" id="224325"/>
    <lineage>
        <taxon>Archaea</taxon>
        <taxon>Methanobacteriati</taxon>
        <taxon>Methanobacteriota</taxon>
        <taxon>Archaeoglobi</taxon>
        <taxon>Archaeoglobales</taxon>
        <taxon>Archaeoglobaceae</taxon>
        <taxon>Archaeoglobus</taxon>
    </lineage>
</organism>
<gene>
    <name type="primary">hmeD</name>
    <name type="ordered locus">AF_0502</name>
</gene>
<evidence type="ECO:0000255" key="1"/>
<evidence type="ECO:0000255" key="2">
    <source>
        <dbReference type="PROSITE-ProRule" id="PRU00711"/>
    </source>
</evidence>
<evidence type="ECO:0000305" key="3"/>
<sequence length="555" mass="64368">MEEMPERIEIKQKFPSWREMLKPVKEFEEGRLSYLSLPKQVDSEWFKMPFGDVERDFHDLKLPENWKEIFLEAMKDTLEKNRSFKLFMDICVRCGACADKCHYYIGTGDPKNMPVARAELIRSVYRRYFTPAGKFFGEWAGARELNEDVLKELYYYAYQCSLCRRCSLFCPYGIDTAEIVWWLRRMLSRVGLNQRFMTISIEASSRTGNHLGLLPGGMYGAIQQGLEELKDYTGFDLHTYINKKGADILFVAPSADYFATPHWYVMLGYLLLFNELEEKYGLTITWSTYASEGGNFGTFHSYEAAQLLNSKIYKEAERLGVSFIIGGECGHMWRDKHQFINTMNLPPKHEEWRRFWEDPDLGNLAEGLRGVRFDSYASGEHGWIHILEFVAALIEHKKIVVDKSRNDKWIATYHDPCNVARGMGLIEEPRYVLRNVMNNFYDMPEHTIKDKTYCCGAGGGMLADELMDLRMRGVMPRMMAVRHVYRKYGVNILLTPCAIDKAQFPHALEYWKIPIEVGGPMEMVGNALVMTAFGEKPEDRQFDLRGEPLKPEEGE</sequence>
<protein>
    <recommendedName>
        <fullName>Hdr-like menaquinol oxidoreductase iron-sulfur subunit 2</fullName>
        <shortName>Hme subunit D</shortName>
    </recommendedName>
</protein>
<reference key="1">
    <citation type="journal article" date="1997" name="Nature">
        <title>The complete genome sequence of the hyperthermophilic, sulphate-reducing archaeon Archaeoglobus fulgidus.</title>
        <authorList>
            <person name="Klenk H.-P."/>
            <person name="Clayton R.A."/>
            <person name="Tomb J.-F."/>
            <person name="White O."/>
            <person name="Nelson K.E."/>
            <person name="Ketchum K.A."/>
            <person name="Dodson R.J."/>
            <person name="Gwinn M.L."/>
            <person name="Hickey E.K."/>
            <person name="Peterson J.D."/>
            <person name="Richardson D.L."/>
            <person name="Kerlavage A.R."/>
            <person name="Graham D.E."/>
            <person name="Kyrpides N.C."/>
            <person name="Fleischmann R.D."/>
            <person name="Quackenbush J."/>
            <person name="Lee N.H."/>
            <person name="Sutton G.G."/>
            <person name="Gill S.R."/>
            <person name="Kirkness E.F."/>
            <person name="Dougherty B.A."/>
            <person name="McKenney K."/>
            <person name="Adams M.D."/>
            <person name="Loftus B.J."/>
            <person name="Peterson S.N."/>
            <person name="Reich C.I."/>
            <person name="McNeil L.K."/>
            <person name="Badger J.H."/>
            <person name="Glodek A."/>
            <person name="Zhou L."/>
            <person name="Overbeek R."/>
            <person name="Gocayne J.D."/>
            <person name="Weidman J.F."/>
            <person name="McDonald L.A."/>
            <person name="Utterback T.R."/>
            <person name="Cotton M.D."/>
            <person name="Spriggs T."/>
            <person name="Artiach P."/>
            <person name="Kaine B.P."/>
            <person name="Sykes S.M."/>
            <person name="Sadow P.W."/>
            <person name="D'Andrea K.P."/>
            <person name="Bowman C."/>
            <person name="Fujii C."/>
            <person name="Garland S.A."/>
            <person name="Mason T.M."/>
            <person name="Olsen G.J."/>
            <person name="Fraser C.M."/>
            <person name="Smith H.O."/>
            <person name="Woese C.R."/>
            <person name="Venter J.C."/>
        </authorList>
    </citation>
    <scope>NUCLEOTIDE SEQUENCE [LARGE SCALE GENOMIC DNA]</scope>
    <source>
        <strain>ATCC 49558 / DSM 4304 / JCM 9628 / NBRC 100126 / VC-16</strain>
    </source>
</reference>
<reference key="2">
    <citation type="journal article" date="2002" name="Eur. J. Biochem.">
        <title>Purification and characterization of a membrane-bound enzyme complex from the sulfate-reducing archaeon Archaeoglobus fulgidus related to heterodisulfide reductase from methanogenic archaea.</title>
        <authorList>
            <person name="Mander G.J."/>
            <person name="Duin E.C."/>
            <person name="Linder D."/>
            <person name="Stetter K.O."/>
            <person name="Hedderich R."/>
        </authorList>
    </citation>
    <scope>PROTEIN SEQUENCE OF 1-15</scope>
    <scope>EPR SPECTROSCOPY</scope>
    <scope>REDOX POTENTIOMETRY OF HEMES</scope>
    <source>
        <strain>ATCC 49558 / DSM 4304 / JCM 9628 / NBRC 100126 / VC-16</strain>
    </source>
</reference>
<proteinExistence type="evidence at protein level"/>
<feature type="chain" id="PRO_0000159262" description="Hdr-like menaquinol oxidoreductase iron-sulfur subunit 2">
    <location>
        <begin position="1"/>
        <end position="555"/>
    </location>
</feature>
<feature type="domain" description="4Fe-4S ferredoxin-type 1" evidence="2">
    <location>
        <begin position="82"/>
        <end position="111"/>
    </location>
</feature>
<feature type="domain" description="4Fe-4S ferredoxin-type 2" evidence="2">
    <location>
        <begin position="151"/>
        <end position="180"/>
    </location>
</feature>
<feature type="binding site" evidence="1">
    <location>
        <position position="91"/>
    </location>
    <ligand>
        <name>[4Fe-4S] cluster</name>
        <dbReference type="ChEBI" id="CHEBI:49883"/>
        <label>1</label>
    </ligand>
</feature>
<feature type="binding site" evidence="1">
    <location>
        <position position="94"/>
    </location>
    <ligand>
        <name>[4Fe-4S] cluster</name>
        <dbReference type="ChEBI" id="CHEBI:49883"/>
        <label>1</label>
    </ligand>
</feature>
<feature type="binding site" evidence="1">
    <location>
        <position position="97"/>
    </location>
    <ligand>
        <name>[4Fe-4S] cluster</name>
        <dbReference type="ChEBI" id="CHEBI:49883"/>
        <label>1</label>
    </ligand>
</feature>
<feature type="binding site" evidence="1">
    <location>
        <position position="101"/>
    </location>
    <ligand>
        <name>[4Fe-4S] cluster</name>
        <dbReference type="ChEBI" id="CHEBI:49883"/>
        <label>2</label>
    </ligand>
</feature>
<feature type="binding site" evidence="1">
    <location>
        <position position="160"/>
    </location>
    <ligand>
        <name>[4Fe-4S] cluster</name>
        <dbReference type="ChEBI" id="CHEBI:49883"/>
        <label>2</label>
    </ligand>
</feature>
<feature type="binding site" evidence="1">
    <location>
        <position position="163"/>
    </location>
    <ligand>
        <name>[4Fe-4S] cluster</name>
        <dbReference type="ChEBI" id="CHEBI:49883"/>
        <label>2</label>
    </ligand>
</feature>
<feature type="binding site" evidence="1">
    <location>
        <position position="166"/>
    </location>
    <ligand>
        <name>[4Fe-4S] cluster</name>
        <dbReference type="ChEBI" id="CHEBI:49883"/>
        <label>2</label>
    </ligand>
</feature>
<feature type="binding site" evidence="1">
    <location>
        <position position="170"/>
    </location>
    <ligand>
        <name>[4Fe-4S] cluster</name>
        <dbReference type="ChEBI" id="CHEBI:49883"/>
        <label>1</label>
    </ligand>
</feature>
<feature type="sequence conflict" description="In Ref. 2; AA sequence." evidence="3" ref="2">
    <original>E</original>
    <variation>R</variation>
    <location>
        <position position="3"/>
    </location>
</feature>
<feature type="sequence conflict" description="In Ref. 2; AA sequence." evidence="3" ref="2">
    <original>P</original>
    <variation>R</variation>
    <location>
        <position position="5"/>
    </location>
</feature>
<feature type="sequence conflict" description="In Ref. 2; AA sequence." evidence="3" ref="2">
    <original>R</original>
    <variation>I</variation>
    <location>
        <position position="7"/>
    </location>
</feature>
<feature type="sequence conflict" description="In Ref. 2; AA sequence." evidence="3" ref="2">
    <original>Q</original>
    <variation>A</variation>
    <location>
        <position position="12"/>
    </location>
</feature>
<dbReference type="EMBL" id="AE000782">
    <property type="protein sequence ID" value="AAB90735.1"/>
    <property type="molecule type" value="Genomic_DNA"/>
</dbReference>
<dbReference type="PIR" id="F69312">
    <property type="entry name" value="F69312"/>
</dbReference>
<dbReference type="RefSeq" id="WP_010878009.1">
    <property type="nucleotide sequence ID" value="NC_000917.1"/>
</dbReference>
<dbReference type="STRING" id="224325.AF_0502"/>
<dbReference type="PaxDb" id="224325-AF_0502"/>
<dbReference type="EnsemblBacteria" id="AAB90735">
    <property type="protein sequence ID" value="AAB90735"/>
    <property type="gene ID" value="AF_0502"/>
</dbReference>
<dbReference type="GeneID" id="24794042"/>
<dbReference type="KEGG" id="afu:AF_0502"/>
<dbReference type="eggNOG" id="arCOG00333">
    <property type="taxonomic scope" value="Archaea"/>
</dbReference>
<dbReference type="HOGENOM" id="CLU_023081_6_0_2"/>
<dbReference type="OrthoDB" id="42878at2157"/>
<dbReference type="PhylomeDB" id="O29748"/>
<dbReference type="Proteomes" id="UP000002199">
    <property type="component" value="Chromosome"/>
</dbReference>
<dbReference type="GO" id="GO:0005886">
    <property type="term" value="C:plasma membrane"/>
    <property type="evidence" value="ECO:0007669"/>
    <property type="project" value="UniProtKB-SubCell"/>
</dbReference>
<dbReference type="GO" id="GO:0051539">
    <property type="term" value="F:4 iron, 4 sulfur cluster binding"/>
    <property type="evidence" value="ECO:0007669"/>
    <property type="project" value="UniProtKB-KW"/>
</dbReference>
<dbReference type="GO" id="GO:0046872">
    <property type="term" value="F:metal ion binding"/>
    <property type="evidence" value="ECO:0007669"/>
    <property type="project" value="UniProtKB-KW"/>
</dbReference>
<dbReference type="GO" id="GO:0016491">
    <property type="term" value="F:oxidoreductase activity"/>
    <property type="evidence" value="ECO:0007669"/>
    <property type="project" value="UniProtKB-KW"/>
</dbReference>
<dbReference type="Gene3D" id="1.10.1060.10">
    <property type="entry name" value="Alpha-helical ferredoxin"/>
    <property type="match status" value="1"/>
</dbReference>
<dbReference type="InterPro" id="IPR017896">
    <property type="entry name" value="4Fe4S_Fe-S-bd"/>
</dbReference>
<dbReference type="InterPro" id="IPR017900">
    <property type="entry name" value="4Fe4S_Fe_S_CS"/>
</dbReference>
<dbReference type="InterPro" id="IPR004017">
    <property type="entry name" value="Cys_rich_dom"/>
</dbReference>
<dbReference type="InterPro" id="IPR009051">
    <property type="entry name" value="Helical_ferredxn"/>
</dbReference>
<dbReference type="NCBIfam" id="NF045796">
    <property type="entry name" value="DsrK"/>
    <property type="match status" value="1"/>
</dbReference>
<dbReference type="PANTHER" id="PTHR43551">
    <property type="entry name" value="FUMARATE REDUCTASE IRON-SULFUR SUBUNIT"/>
    <property type="match status" value="1"/>
</dbReference>
<dbReference type="PANTHER" id="PTHR43551:SF1">
    <property type="entry name" value="HETERODISULFIDE REDUCTASE"/>
    <property type="match status" value="1"/>
</dbReference>
<dbReference type="Pfam" id="PF02754">
    <property type="entry name" value="CCG"/>
    <property type="match status" value="1"/>
</dbReference>
<dbReference type="Pfam" id="PF13183">
    <property type="entry name" value="Fer4_8"/>
    <property type="match status" value="1"/>
</dbReference>
<dbReference type="SUPFAM" id="SSF46548">
    <property type="entry name" value="alpha-helical ferredoxin"/>
    <property type="match status" value="1"/>
</dbReference>
<dbReference type="PROSITE" id="PS00198">
    <property type="entry name" value="4FE4S_FER_1"/>
    <property type="match status" value="1"/>
</dbReference>
<dbReference type="PROSITE" id="PS51379">
    <property type="entry name" value="4FE4S_FER_2"/>
    <property type="match status" value="2"/>
</dbReference>
<accession>O29748</accession>
<name>HMED_ARCFU</name>
<keyword id="KW-0004">4Fe-4S</keyword>
<keyword id="KW-1003">Cell membrane</keyword>
<keyword id="KW-0903">Direct protein sequencing</keyword>
<keyword id="KW-0249">Electron transport</keyword>
<keyword id="KW-0408">Iron</keyword>
<keyword id="KW-0411">Iron-sulfur</keyword>
<keyword id="KW-0472">Membrane</keyword>
<keyword id="KW-0479">Metal-binding</keyword>
<keyword id="KW-0560">Oxidoreductase</keyword>
<keyword id="KW-1185">Reference proteome</keyword>
<keyword id="KW-0677">Repeat</keyword>
<keyword id="KW-0813">Transport</keyword>